<protein>
    <recommendedName>
        <fullName>Transcription factor AP-2-epsilon</fullName>
        <shortName>AP-2-epsilon</shortName>
    </recommendedName>
</protein>
<dbReference type="EMBL" id="BC111478">
    <property type="protein sequence ID" value="AAI11479.1"/>
    <property type="molecule type" value="mRNA"/>
</dbReference>
<dbReference type="SMR" id="Q2T9K2"/>
<dbReference type="DNASU" id="735028"/>
<dbReference type="KEGG" id="xla:735028"/>
<dbReference type="AGR" id="Xenbase:XB-GENE-876809"/>
<dbReference type="CTD" id="735028"/>
<dbReference type="Xenbase" id="XB-GENE-876809">
    <property type="gene designation" value="tfap2e.L"/>
</dbReference>
<dbReference type="OMA" id="PPVARYN"/>
<dbReference type="OrthoDB" id="6252992at2759"/>
<dbReference type="Proteomes" id="UP000186698">
    <property type="component" value="Chromosome 2L"/>
</dbReference>
<dbReference type="Bgee" id="735028">
    <property type="expression patterns" value="Expressed in camera-type eye and 4 other cell types or tissues"/>
</dbReference>
<dbReference type="GO" id="GO:0005634">
    <property type="term" value="C:nucleus"/>
    <property type="evidence" value="ECO:0000318"/>
    <property type="project" value="GO_Central"/>
</dbReference>
<dbReference type="GO" id="GO:0001228">
    <property type="term" value="F:DNA-binding transcription activator activity, RNA polymerase II-specific"/>
    <property type="evidence" value="ECO:0000318"/>
    <property type="project" value="GO_Central"/>
</dbReference>
<dbReference type="GO" id="GO:0000977">
    <property type="term" value="F:RNA polymerase II transcription regulatory region sequence-specific DNA binding"/>
    <property type="evidence" value="ECO:0000318"/>
    <property type="project" value="GO_Central"/>
</dbReference>
<dbReference type="GO" id="GO:0045944">
    <property type="term" value="P:positive regulation of transcription by RNA polymerase II"/>
    <property type="evidence" value="ECO:0000318"/>
    <property type="project" value="GO_Central"/>
</dbReference>
<dbReference type="GO" id="GO:0042127">
    <property type="term" value="P:regulation of cell population proliferation"/>
    <property type="evidence" value="ECO:0000318"/>
    <property type="project" value="GO_Central"/>
</dbReference>
<dbReference type="InterPro" id="IPR004979">
    <property type="entry name" value="TF_AP2"/>
</dbReference>
<dbReference type="InterPro" id="IPR013854">
    <property type="entry name" value="TF_AP2_C"/>
</dbReference>
<dbReference type="PANTHER" id="PTHR10812">
    <property type="entry name" value="TRANSCRIPTION FACTOR AP-2"/>
    <property type="match status" value="1"/>
</dbReference>
<dbReference type="PANTHER" id="PTHR10812:SF13">
    <property type="entry name" value="TRANSCRIPTION FACTOR AP-2-EPSILON"/>
    <property type="match status" value="1"/>
</dbReference>
<dbReference type="Pfam" id="PF03299">
    <property type="entry name" value="TF_AP-2"/>
    <property type="match status" value="1"/>
</dbReference>
<dbReference type="PRINTS" id="PR01748">
    <property type="entry name" value="AP2TNSCPFCT"/>
</dbReference>
<name>AP2E_XENLA</name>
<organism>
    <name type="scientific">Xenopus laevis</name>
    <name type="common">African clawed frog</name>
    <dbReference type="NCBI Taxonomy" id="8355"/>
    <lineage>
        <taxon>Eukaryota</taxon>
        <taxon>Metazoa</taxon>
        <taxon>Chordata</taxon>
        <taxon>Craniata</taxon>
        <taxon>Vertebrata</taxon>
        <taxon>Euteleostomi</taxon>
        <taxon>Amphibia</taxon>
        <taxon>Batrachia</taxon>
        <taxon>Anura</taxon>
        <taxon>Pipoidea</taxon>
        <taxon>Pipidae</taxon>
        <taxon>Xenopodinae</taxon>
        <taxon>Xenopus</taxon>
        <taxon>Xenopus</taxon>
    </lineage>
</organism>
<proteinExistence type="evidence at transcript level"/>
<reference evidence="6" key="1">
    <citation type="submission" date="2005-12" db="EMBL/GenBank/DDBJ databases">
        <authorList>
            <consortium name="NIH - Xenopus Gene Collection (XGC) project"/>
        </authorList>
    </citation>
    <scope>NUCLEOTIDE SEQUENCE [LARGE SCALE MRNA]</scope>
    <source>
        <tissue evidence="6">Embryo</tissue>
    </source>
</reference>
<accession>Q2T9K2</accession>
<gene>
    <name evidence="2" type="primary">tfap2e</name>
</gene>
<evidence type="ECO:0000250" key="1"/>
<evidence type="ECO:0000250" key="2">
    <source>
        <dbReference type="UniProtKB" id="Q6VUC0"/>
    </source>
</evidence>
<evidence type="ECO:0000250" key="3">
    <source>
        <dbReference type="UniProtKB" id="Q6VUP9"/>
    </source>
</evidence>
<evidence type="ECO:0000255" key="4"/>
<evidence type="ECO:0000256" key="5">
    <source>
        <dbReference type="SAM" id="MobiDB-lite"/>
    </source>
</evidence>
<evidence type="ECO:0000312" key="6">
    <source>
        <dbReference type="EMBL" id="AAI11479.1"/>
    </source>
</evidence>
<sequence>MLVHAYSAMDRSEVLNGAASGGRLSQLSSLNQGPYSSAPPLCHTPASDFQPPYFPPPYPQPPLSYSQSQESGYPHLGDPYSSINSIHHQHQQPSWHTPRSRPEEAGLLSQTHRGLSLDPRRDYGGMSRLIPGLTDGGHSLADSSLSIHALSHHSLEDMQLLDESGISILDQSVIKKVPISSKNNSSMMSALSMNKESLIGGVSNPNEVFCSVPGRLSLLSSTSKYKVTVGEVQRRLSPPECLNASLLGGVLRRAKSKNGGRCLRERLEKIGLNLPAGRRKAANVTLLTSLVEGEAVHLARDFGYVCETEFPAKAAAEYLCRQHSDPTELHARKNMLLATKQICKEFADLLAQDRSPLGNSRPSLILEPGVQSCLTHFSLITHGFGGPAICAALTAFQNYLLESLKGMDKIFMSSTGNGHSAAESKSEKDIKHRK</sequence>
<feature type="chain" id="PRO_0000309519" description="Transcription factor AP-2-epsilon">
    <location>
        <begin position="1"/>
        <end position="434"/>
    </location>
</feature>
<feature type="region of interest" description="Disordered" evidence="5">
    <location>
        <begin position="30"/>
        <end position="123"/>
    </location>
</feature>
<feature type="region of interest" description="H-S-H (helix-span-helix), dimerization" evidence="4">
    <location>
        <begin position="278"/>
        <end position="408"/>
    </location>
</feature>
<feature type="region of interest" description="Disordered" evidence="5">
    <location>
        <begin position="415"/>
        <end position="434"/>
    </location>
</feature>
<feature type="short sequence motif" description="PPxY motif" evidence="4">
    <location>
        <begin position="53"/>
        <end position="58"/>
    </location>
</feature>
<feature type="compositionally biased region" description="Pro residues" evidence="5">
    <location>
        <begin position="52"/>
        <end position="62"/>
    </location>
</feature>
<feature type="compositionally biased region" description="Polar residues" evidence="5">
    <location>
        <begin position="81"/>
        <end position="97"/>
    </location>
</feature>
<feature type="compositionally biased region" description="Basic and acidic residues" evidence="5">
    <location>
        <begin position="422"/>
        <end position="434"/>
    </location>
</feature>
<comment type="function">
    <text evidence="1">Sequence-specific DNA-binding protein that interacts with inducible viral and cellular enhancer elements to regulate transcription of selected genes. AP-2 factors bind to the consensus sequence 5'-GCCNNNGGC-3' and activate genes involved in a large spectrum of important biological functions (By similarity).</text>
</comment>
<comment type="subunit">
    <text evidence="3">Binds DNA as a dimer. Can form homodimers or heterodimers with other AP-2 family members (By similarity).</text>
</comment>
<comment type="subcellular location">
    <subcellularLocation>
        <location evidence="3">Nucleus</location>
    </subcellularLocation>
</comment>
<comment type="similarity">
    <text evidence="4">Belongs to the AP-2 family.</text>
</comment>
<keyword id="KW-0010">Activator</keyword>
<keyword id="KW-0238">DNA-binding</keyword>
<keyword id="KW-0539">Nucleus</keyword>
<keyword id="KW-1185">Reference proteome</keyword>
<keyword id="KW-0804">Transcription</keyword>
<keyword id="KW-0805">Transcription regulation</keyword>